<accession>O49809</accession>
<organism evidence="5">
    <name type="scientific">Brassica napus</name>
    <name type="common">Rape</name>
    <dbReference type="NCBI Taxonomy" id="3708"/>
    <lineage>
        <taxon>Eukaryota</taxon>
        <taxon>Viridiplantae</taxon>
        <taxon>Streptophyta</taxon>
        <taxon>Embryophyta</taxon>
        <taxon>Tracheophyta</taxon>
        <taxon>Spermatophyta</taxon>
        <taxon>Magnoliopsida</taxon>
        <taxon>eudicotyledons</taxon>
        <taxon>Gunneridae</taxon>
        <taxon>Pentapetalae</taxon>
        <taxon>rosids</taxon>
        <taxon>malvids</taxon>
        <taxon>Brassicales</taxon>
        <taxon>Brassicaceae</taxon>
        <taxon>Brassiceae</taxon>
        <taxon>Brassica</taxon>
    </lineage>
</organism>
<protein>
    <recommendedName>
        <fullName>Glyoxysomal fatty acid beta-oxidation multifunctional protein MFP-a</fullName>
    </recommendedName>
    <domain>
        <recommendedName>
            <fullName>Enoyl-CoA hydratase/3-2-trans-enoyl-CoA isomerase/3-hydroxybutyryl-CoA epimerase</fullName>
            <ecNumber>4.2.1.17</ecNumber>
            <ecNumber>5.1.2.3</ecNumber>
            <ecNumber>5.3.3.8</ecNumber>
        </recommendedName>
    </domain>
    <domain>
        <recommendedName>
            <fullName>3-hydroxyacyl-CoA dehydrogenase</fullName>
            <ecNumber>1.1.1.35</ecNumber>
        </recommendedName>
    </domain>
</protein>
<comment type="catalytic activity">
    <reaction evidence="2">
        <text>a (3S)-3-hydroxyacyl-CoA = a (2E)-enoyl-CoA + H2O</text>
        <dbReference type="Rhea" id="RHEA:16105"/>
        <dbReference type="ChEBI" id="CHEBI:15377"/>
        <dbReference type="ChEBI" id="CHEBI:57318"/>
        <dbReference type="ChEBI" id="CHEBI:58856"/>
        <dbReference type="EC" id="4.2.1.17"/>
    </reaction>
</comment>
<comment type="catalytic activity">
    <reaction evidence="2">
        <text>a 4-saturated-(3S)-3-hydroxyacyl-CoA = a (3E)-enoyl-CoA + H2O</text>
        <dbReference type="Rhea" id="RHEA:20724"/>
        <dbReference type="ChEBI" id="CHEBI:15377"/>
        <dbReference type="ChEBI" id="CHEBI:58521"/>
        <dbReference type="ChEBI" id="CHEBI:137480"/>
        <dbReference type="EC" id="4.2.1.17"/>
    </reaction>
</comment>
<comment type="catalytic activity">
    <reaction>
        <text>a (3Z)-enoyl-CoA = a 4-saturated (2E)-enoyl-CoA</text>
        <dbReference type="Rhea" id="RHEA:45900"/>
        <dbReference type="ChEBI" id="CHEBI:85097"/>
        <dbReference type="ChEBI" id="CHEBI:85489"/>
        <dbReference type="EC" id="5.3.3.8"/>
    </reaction>
</comment>
<comment type="catalytic activity">
    <reaction>
        <text>a (3E)-enoyl-CoA = a 4-saturated (2E)-enoyl-CoA</text>
        <dbReference type="Rhea" id="RHEA:45228"/>
        <dbReference type="ChEBI" id="CHEBI:58521"/>
        <dbReference type="ChEBI" id="CHEBI:85097"/>
        <dbReference type="EC" id="5.3.3.8"/>
    </reaction>
</comment>
<comment type="catalytic activity">
    <reaction evidence="2">
        <text>(3S)-3-hydroxybutanoyl-CoA = (3R)-3-hydroxybutanoyl-CoA</text>
        <dbReference type="Rhea" id="RHEA:21760"/>
        <dbReference type="ChEBI" id="CHEBI:57315"/>
        <dbReference type="ChEBI" id="CHEBI:57316"/>
        <dbReference type="EC" id="5.1.2.3"/>
    </reaction>
</comment>
<comment type="catalytic activity">
    <reaction evidence="2">
        <text>a (3S)-3-hydroxyacyl-CoA + NAD(+) = a 3-oxoacyl-CoA + NADH + H(+)</text>
        <dbReference type="Rhea" id="RHEA:22432"/>
        <dbReference type="ChEBI" id="CHEBI:15378"/>
        <dbReference type="ChEBI" id="CHEBI:57318"/>
        <dbReference type="ChEBI" id="CHEBI:57540"/>
        <dbReference type="ChEBI" id="CHEBI:57945"/>
        <dbReference type="ChEBI" id="CHEBI:90726"/>
        <dbReference type="EC" id="1.1.1.35"/>
    </reaction>
</comment>
<comment type="pathway">
    <text>Lipid metabolism; fatty acid beta-oxidation.</text>
</comment>
<comment type="subcellular location">
    <subcellularLocation>
        <location evidence="1">Glyoxysome</location>
    </subcellularLocation>
</comment>
<comment type="domain">
    <text evidence="1">The epimerase and isomerase activities are contained in the N-terminal region while the dehydrogenase activity is in the C-terminal region.</text>
</comment>
<comment type="similarity">
    <text evidence="4">In the N-terminal section; belongs to the enoyl-CoA hydratase/isomerase family.</text>
</comment>
<comment type="similarity">
    <text evidence="4">In the central section; belongs to the 3-hydroxyacyl-CoA dehydrogenase family.</text>
</comment>
<reference evidence="4" key="1">
    <citation type="online journal article" date="1998" name="Plant Gene Register">
        <title>A full-length cDNA clone from Brassica napus encoding a multifunctional enzyme of the glyoxysomal fatty acid beta-oxidation.</title>
        <authorList>
            <person name="Geshi N."/>
            <person name="Rechinger K.B."/>
            <person name="Brandt A."/>
        </authorList>
        <locator>PGR98-067</locator>
    </citation>
    <scope>NUCLEOTIDE SEQUENCE [MRNA]</scope>
    <source>
        <strain>cv. Global</strain>
    </source>
</reference>
<proteinExistence type="evidence at transcript level"/>
<feature type="chain" id="PRO_0000109250" description="Glyoxysomal fatty acid beta-oxidation multifunctional protein MFP-a">
    <location>
        <begin position="1"/>
        <end position="725"/>
    </location>
</feature>
<feature type="short sequence motif" description="Microbody targeting signal" evidence="3">
    <location>
        <begin position="723"/>
        <end position="725"/>
    </location>
</feature>
<feature type="active site" description="Nucleophile" evidence="3">
    <location>
        <position position="119"/>
    </location>
</feature>
<feature type="active site" description="Proton acceptor" evidence="3">
    <location>
        <position position="139"/>
    </location>
</feature>
<keyword id="KW-0276">Fatty acid metabolism</keyword>
<keyword id="KW-0330">Glyoxysome</keyword>
<keyword id="KW-0413">Isomerase</keyword>
<keyword id="KW-0443">Lipid metabolism</keyword>
<keyword id="KW-0456">Lyase</keyword>
<keyword id="KW-0511">Multifunctional enzyme</keyword>
<keyword id="KW-0520">NAD</keyword>
<keyword id="KW-0560">Oxidoreductase</keyword>
<keyword id="KW-0576">Peroxisome</keyword>
<evidence type="ECO:0000250" key="1"/>
<evidence type="ECO:0000250" key="2">
    <source>
        <dbReference type="UniProtKB" id="Q39659"/>
    </source>
</evidence>
<evidence type="ECO:0000255" key="3"/>
<evidence type="ECO:0000305" key="4"/>
<evidence type="ECO:0000312" key="5">
    <source>
        <dbReference type="EMBL" id="CAA04386.1"/>
    </source>
</evidence>
<name>MFPA_BRANA</name>
<dbReference type="EC" id="4.2.1.17"/>
<dbReference type="EC" id="5.1.2.3"/>
<dbReference type="EC" id="5.3.3.8"/>
<dbReference type="EC" id="1.1.1.35"/>
<dbReference type="EMBL" id="AJ000886">
    <property type="protein sequence ID" value="CAA04386.1"/>
    <property type="molecule type" value="mRNA"/>
</dbReference>
<dbReference type="PIR" id="T08017">
    <property type="entry name" value="T08017"/>
</dbReference>
<dbReference type="RefSeq" id="NP_001302620.1">
    <property type="nucleotide sequence ID" value="NM_001315691.1"/>
</dbReference>
<dbReference type="SMR" id="O49809"/>
<dbReference type="GeneID" id="106389027"/>
<dbReference type="KEGG" id="bna:106389027"/>
<dbReference type="OrthoDB" id="2018133at2759"/>
<dbReference type="UniPathway" id="UPA00659"/>
<dbReference type="GO" id="GO:0009514">
    <property type="term" value="C:glyoxysome"/>
    <property type="evidence" value="ECO:0007669"/>
    <property type="project" value="UniProtKB-SubCell"/>
</dbReference>
<dbReference type="GO" id="GO:0018812">
    <property type="term" value="F:3-hydroxyacyl-CoA dehydratase activity"/>
    <property type="evidence" value="ECO:0000250"/>
    <property type="project" value="UniProtKB"/>
</dbReference>
<dbReference type="GO" id="GO:0003857">
    <property type="term" value="F:3-hydroxyacyl-CoA dehydrogenase activity"/>
    <property type="evidence" value="ECO:0007669"/>
    <property type="project" value="UniProtKB-EC"/>
</dbReference>
<dbReference type="GO" id="GO:0008692">
    <property type="term" value="F:3-hydroxybutyryl-CoA epimerase activity"/>
    <property type="evidence" value="ECO:0000250"/>
    <property type="project" value="UniProtKB"/>
</dbReference>
<dbReference type="GO" id="GO:0004165">
    <property type="term" value="F:delta(3)-delta(2)-enoyl-CoA isomerase activity"/>
    <property type="evidence" value="ECO:0000250"/>
    <property type="project" value="UniProtKB"/>
</dbReference>
<dbReference type="GO" id="GO:0004300">
    <property type="term" value="F:enoyl-CoA hydratase activity"/>
    <property type="evidence" value="ECO:0000250"/>
    <property type="project" value="UniProtKB"/>
</dbReference>
<dbReference type="GO" id="GO:0070403">
    <property type="term" value="F:NAD+ binding"/>
    <property type="evidence" value="ECO:0007669"/>
    <property type="project" value="InterPro"/>
</dbReference>
<dbReference type="GO" id="GO:0006635">
    <property type="term" value="P:fatty acid beta-oxidation"/>
    <property type="evidence" value="ECO:0000250"/>
    <property type="project" value="UniProtKB"/>
</dbReference>
<dbReference type="CDD" id="cd06558">
    <property type="entry name" value="crotonase-like"/>
    <property type="match status" value="1"/>
</dbReference>
<dbReference type="FunFam" id="3.40.50.720:FF:000009">
    <property type="entry name" value="Fatty oxidation complex, alpha subunit"/>
    <property type="match status" value="1"/>
</dbReference>
<dbReference type="FunFam" id="1.10.1040.50:FF:000004">
    <property type="entry name" value="Peroxisomal fatty acid beta-oxidation multifunctional protein"/>
    <property type="match status" value="1"/>
</dbReference>
<dbReference type="FunFam" id="3.90.226.10:FF:000025">
    <property type="entry name" value="Peroxisomal fatty acid beta-oxidation multifunctional protein"/>
    <property type="match status" value="1"/>
</dbReference>
<dbReference type="Gene3D" id="1.10.1040.50">
    <property type="match status" value="1"/>
</dbReference>
<dbReference type="Gene3D" id="3.90.226.10">
    <property type="entry name" value="2-enoyl-CoA Hydratase, Chain A, domain 1"/>
    <property type="match status" value="1"/>
</dbReference>
<dbReference type="Gene3D" id="3.40.50.720">
    <property type="entry name" value="NAD(P)-binding Rossmann-like Domain"/>
    <property type="match status" value="1"/>
</dbReference>
<dbReference type="InterPro" id="IPR006180">
    <property type="entry name" value="3-OHacyl-CoA_DH_CS"/>
</dbReference>
<dbReference type="InterPro" id="IPR006176">
    <property type="entry name" value="3-OHacyl-CoA_DH_NAD-bd"/>
</dbReference>
<dbReference type="InterPro" id="IPR006108">
    <property type="entry name" value="3HC_DH_C"/>
</dbReference>
<dbReference type="InterPro" id="IPR008927">
    <property type="entry name" value="6-PGluconate_DH-like_C_sf"/>
</dbReference>
<dbReference type="InterPro" id="IPR029045">
    <property type="entry name" value="ClpP/crotonase-like_dom_sf"/>
</dbReference>
<dbReference type="InterPro" id="IPR018376">
    <property type="entry name" value="Enoyl-CoA_hyd/isom_CS"/>
</dbReference>
<dbReference type="InterPro" id="IPR001753">
    <property type="entry name" value="Enoyl-CoA_hydra/iso"/>
</dbReference>
<dbReference type="InterPro" id="IPR036291">
    <property type="entry name" value="NAD(P)-bd_dom_sf"/>
</dbReference>
<dbReference type="PANTHER" id="PTHR23309:SF41">
    <property type="entry name" value="(RAPE) HYPOTHETICAL PROTEIN"/>
    <property type="match status" value="1"/>
</dbReference>
<dbReference type="PANTHER" id="PTHR23309">
    <property type="entry name" value="3-HYDROXYACYL-COA DEHYROGENASE"/>
    <property type="match status" value="1"/>
</dbReference>
<dbReference type="Pfam" id="PF00725">
    <property type="entry name" value="3HCDH"/>
    <property type="match status" value="1"/>
</dbReference>
<dbReference type="Pfam" id="PF02737">
    <property type="entry name" value="3HCDH_N"/>
    <property type="match status" value="1"/>
</dbReference>
<dbReference type="Pfam" id="PF00378">
    <property type="entry name" value="ECH_1"/>
    <property type="match status" value="1"/>
</dbReference>
<dbReference type="SUPFAM" id="SSF48179">
    <property type="entry name" value="6-phosphogluconate dehydrogenase C-terminal domain-like"/>
    <property type="match status" value="2"/>
</dbReference>
<dbReference type="SUPFAM" id="SSF52096">
    <property type="entry name" value="ClpP/crotonase"/>
    <property type="match status" value="1"/>
</dbReference>
<dbReference type="SUPFAM" id="SSF51735">
    <property type="entry name" value="NAD(P)-binding Rossmann-fold domains"/>
    <property type="match status" value="1"/>
</dbReference>
<dbReference type="PROSITE" id="PS00067">
    <property type="entry name" value="3HCDH"/>
    <property type="match status" value="1"/>
</dbReference>
<dbReference type="PROSITE" id="PS00166">
    <property type="entry name" value="ENOYL_COA_HYDRATASE"/>
    <property type="match status" value="1"/>
</dbReference>
<sequence>MASRTKGTTTIEVGADGVAVITLINPPVNSLSFDVLYSLKSNYEEALSRNDVKAIVVTGAKGKFSGGFDISGFGEIQKGTMKEPKVGYISIDILTDLLEAAKKPSVAAIDGLALGGGLELSMACHARISAPGAQLGLPELQLGVIPGFGGTQRLPRLVGLTKALEMILTSKPVKAEEGHSLGLIDAVVPPAELLNAARRWALDIAERRKPWVSSVLKTDKLPPLGEAREILKFAKDQTRRQAPNMKHPLMCLEAVEVGIVSGSRAGLEKEAQVGSEVINLDTTKGLIHVFFSQRGTTKVPGVTDRGLVPRKINKVAIIGGGLMGSGIATALILSNYSVILKEVNEKFLEAGIGRVKANLQSRVKKGKMSKEKFEKTMSLLKGSLDYESFRDVDMVIEAVIENISLKQQIFADLEKYCPQHCILASNTSTIDLNKIGERTKSQDRIIGAHFFSPAHVMPLLEIVRTNHTSAQVIVDLLDVGKKIRKTPVVVGNCTGFAVNRMFFPYTQAAMFLVEHGTDPYLIDKAVSKFGMPMGPFRLCDLVGFGVAIATATQFIENFPERTYKSMIIPLMQEDKRAGEATRKGFYLYDDRRKAKPDPEIKNYIDKARSVSGAKPDPKLEKLSEKEIIEMTFFPVVNEACRVFAEGIAVKAADLDIAGIFGMGFPPYRGGIMFWADSIGSKYIYSKLEEWSKAYGEFFKPCAFLAERGSKGAPLSAPLEQSRSRL</sequence>